<name>ETV2_MOUSE</name>
<reference key="1">
    <citation type="journal article" date="1992" name="Genes Dev.">
        <title>Specificities of protein-protein and protein-DNA interaction of GABP alpha and two newly defined ets-related proteins.</title>
        <authorList>
            <person name="Brown T.A."/>
            <person name="McKnight S.L."/>
        </authorList>
    </citation>
    <scope>NUCLEOTIDE SEQUENCE [MRNA]</scope>
    <source>
        <tissue>Embryo</tissue>
    </source>
</reference>
<reference key="2">
    <citation type="journal article" date="2009" name="PLoS Biol.">
        <title>Lineage-specific biology revealed by a finished genome assembly of the mouse.</title>
        <authorList>
            <person name="Church D.M."/>
            <person name="Goodstadt L."/>
            <person name="Hillier L.W."/>
            <person name="Zody M.C."/>
            <person name="Goldstein S."/>
            <person name="She X."/>
            <person name="Bult C.J."/>
            <person name="Agarwala R."/>
            <person name="Cherry J.L."/>
            <person name="DiCuccio M."/>
            <person name="Hlavina W."/>
            <person name="Kapustin Y."/>
            <person name="Meric P."/>
            <person name="Maglott D."/>
            <person name="Birtle Z."/>
            <person name="Marques A.C."/>
            <person name="Graves T."/>
            <person name="Zhou S."/>
            <person name="Teague B."/>
            <person name="Potamousis K."/>
            <person name="Churas C."/>
            <person name="Place M."/>
            <person name="Herschleb J."/>
            <person name="Runnheim R."/>
            <person name="Forrest D."/>
            <person name="Amos-Landgraf J."/>
            <person name="Schwartz D.C."/>
            <person name="Cheng Z."/>
            <person name="Lindblad-Toh K."/>
            <person name="Eichler E.E."/>
            <person name="Ponting C.P."/>
        </authorList>
    </citation>
    <scope>NUCLEOTIDE SEQUENCE [LARGE SCALE GENOMIC DNA]</scope>
    <source>
        <strain>C57BL/6J</strain>
    </source>
</reference>
<organism>
    <name type="scientific">Mus musculus</name>
    <name type="common">Mouse</name>
    <dbReference type="NCBI Taxonomy" id="10090"/>
    <lineage>
        <taxon>Eukaryota</taxon>
        <taxon>Metazoa</taxon>
        <taxon>Chordata</taxon>
        <taxon>Craniata</taxon>
        <taxon>Vertebrata</taxon>
        <taxon>Euteleostomi</taxon>
        <taxon>Mammalia</taxon>
        <taxon>Eutheria</taxon>
        <taxon>Euarchontoglires</taxon>
        <taxon>Glires</taxon>
        <taxon>Rodentia</taxon>
        <taxon>Myomorpha</taxon>
        <taxon>Muroidea</taxon>
        <taxon>Muridae</taxon>
        <taxon>Murinae</taxon>
        <taxon>Mus</taxon>
        <taxon>Mus</taxon>
    </lineage>
</organism>
<keyword id="KW-0238">DNA-binding</keyword>
<keyword id="KW-0539">Nucleus</keyword>
<keyword id="KW-1185">Reference proteome</keyword>
<dbReference type="EMBL" id="L10427">
    <property type="protein sequence ID" value="AAA19665.1"/>
    <property type="molecule type" value="mRNA"/>
</dbReference>
<dbReference type="EMBL" id="AC167978">
    <property type="status" value="NOT_ANNOTATED_CDS"/>
    <property type="molecule type" value="Genomic_DNA"/>
</dbReference>
<dbReference type="CCDS" id="CCDS39888.1"/>
<dbReference type="RefSeq" id="NP_031985.2">
    <property type="nucleotide sequence ID" value="NM_007959.2"/>
</dbReference>
<dbReference type="SMR" id="P41163"/>
<dbReference type="FunCoup" id="P41163">
    <property type="interactions" value="419"/>
</dbReference>
<dbReference type="STRING" id="10090.ENSMUSP00000103782"/>
<dbReference type="GlyGen" id="P41163">
    <property type="glycosylation" value="1 site"/>
</dbReference>
<dbReference type="PhosphoSitePlus" id="P41163"/>
<dbReference type="PaxDb" id="10090-ENSMUSP00000103782"/>
<dbReference type="Antibodypedia" id="29485">
    <property type="antibodies" value="154 antibodies from 25 providers"/>
</dbReference>
<dbReference type="DNASU" id="14008"/>
<dbReference type="Ensembl" id="ENSMUST00000108147.3">
    <property type="protein sequence ID" value="ENSMUSP00000103782.3"/>
    <property type="gene ID" value="ENSMUSG00000006311.9"/>
</dbReference>
<dbReference type="GeneID" id="14008"/>
<dbReference type="KEGG" id="mmu:14008"/>
<dbReference type="UCSC" id="uc009gfm.1">
    <property type="organism name" value="mouse"/>
</dbReference>
<dbReference type="AGR" id="MGI:99253"/>
<dbReference type="CTD" id="2116"/>
<dbReference type="MGI" id="MGI:99253">
    <property type="gene designation" value="Etv2"/>
</dbReference>
<dbReference type="VEuPathDB" id="HostDB:ENSMUSG00000006311"/>
<dbReference type="eggNOG" id="KOG3806">
    <property type="taxonomic scope" value="Eukaryota"/>
</dbReference>
<dbReference type="GeneTree" id="ENSGT00940000162407"/>
<dbReference type="HOGENOM" id="CLU_077571_0_0_1"/>
<dbReference type="InParanoid" id="P41163"/>
<dbReference type="OMA" id="GLHTDCT"/>
<dbReference type="OrthoDB" id="10067219at2759"/>
<dbReference type="PhylomeDB" id="P41163"/>
<dbReference type="TreeFam" id="TF316214"/>
<dbReference type="BioGRID-ORCS" id="14008">
    <property type="hits" value="1 hit in 76 CRISPR screens"/>
</dbReference>
<dbReference type="PRO" id="PR:P41163"/>
<dbReference type="Proteomes" id="UP000000589">
    <property type="component" value="Chromosome 7"/>
</dbReference>
<dbReference type="RNAct" id="P41163">
    <property type="molecule type" value="protein"/>
</dbReference>
<dbReference type="Bgee" id="ENSMUSG00000006311">
    <property type="expression patterns" value="Expressed in mesodermal cell in embryo and 29 other cell types or tissues"/>
</dbReference>
<dbReference type="GO" id="GO:0005634">
    <property type="term" value="C:nucleus"/>
    <property type="evidence" value="ECO:0007669"/>
    <property type="project" value="UniProtKB-SubCell"/>
</dbReference>
<dbReference type="GO" id="GO:0001228">
    <property type="term" value="F:DNA-binding transcription activator activity, RNA polymerase II-specific"/>
    <property type="evidence" value="ECO:0000314"/>
    <property type="project" value="NTNU_SB"/>
</dbReference>
<dbReference type="GO" id="GO:0000978">
    <property type="term" value="F:RNA polymerase II cis-regulatory region sequence-specific DNA binding"/>
    <property type="evidence" value="ECO:0000314"/>
    <property type="project" value="NTNU_SB"/>
</dbReference>
<dbReference type="GO" id="GO:0001824">
    <property type="term" value="P:blastocyst development"/>
    <property type="evidence" value="ECO:0000315"/>
    <property type="project" value="MGI"/>
</dbReference>
<dbReference type="GO" id="GO:0048514">
    <property type="term" value="P:blood vessel morphogenesis"/>
    <property type="evidence" value="ECO:0000315"/>
    <property type="project" value="MGI"/>
</dbReference>
<dbReference type="GO" id="GO:0030509">
    <property type="term" value="P:BMP signaling pathway"/>
    <property type="evidence" value="ECO:0000314"/>
    <property type="project" value="MGI"/>
</dbReference>
<dbReference type="GO" id="GO:0030218">
    <property type="term" value="P:erythrocyte differentiation"/>
    <property type="evidence" value="ECO:0000315"/>
    <property type="project" value="MGI"/>
</dbReference>
<dbReference type="GO" id="GO:0030097">
    <property type="term" value="P:hemopoiesis"/>
    <property type="evidence" value="ECO:0000314"/>
    <property type="project" value="MGI"/>
</dbReference>
<dbReference type="GO" id="GO:0001701">
    <property type="term" value="P:in utero embryonic development"/>
    <property type="evidence" value="ECO:0000315"/>
    <property type="project" value="MGI"/>
</dbReference>
<dbReference type="GO" id="GO:0001707">
    <property type="term" value="P:mesoderm formation"/>
    <property type="evidence" value="ECO:0000314"/>
    <property type="project" value="MGI"/>
</dbReference>
<dbReference type="GO" id="GO:0007219">
    <property type="term" value="P:Notch signaling pathway"/>
    <property type="evidence" value="ECO:0000314"/>
    <property type="project" value="MGI"/>
</dbReference>
<dbReference type="GO" id="GO:0001890">
    <property type="term" value="P:placenta development"/>
    <property type="evidence" value="ECO:0000315"/>
    <property type="project" value="MGI"/>
</dbReference>
<dbReference type="GO" id="GO:0045603">
    <property type="term" value="P:positive regulation of endothelial cell differentiation"/>
    <property type="evidence" value="ECO:0000314"/>
    <property type="project" value="MGI"/>
</dbReference>
<dbReference type="GO" id="GO:0010628">
    <property type="term" value="P:positive regulation of gene expression"/>
    <property type="evidence" value="ECO:0000314"/>
    <property type="project" value="MGI"/>
</dbReference>
<dbReference type="GO" id="GO:2000382">
    <property type="term" value="P:positive regulation of mesoderm development"/>
    <property type="evidence" value="ECO:0000314"/>
    <property type="project" value="MGI"/>
</dbReference>
<dbReference type="GO" id="GO:0045944">
    <property type="term" value="P:positive regulation of transcription by RNA polymerase II"/>
    <property type="evidence" value="ECO:0000314"/>
    <property type="project" value="NTNU_SB"/>
</dbReference>
<dbReference type="GO" id="GO:0016055">
    <property type="term" value="P:Wnt signaling pathway"/>
    <property type="evidence" value="ECO:0000314"/>
    <property type="project" value="MGI"/>
</dbReference>
<dbReference type="FunFam" id="1.10.10.10:FF:000340">
    <property type="entry name" value="ETS translocation variant 2"/>
    <property type="match status" value="1"/>
</dbReference>
<dbReference type="Gene3D" id="1.10.10.10">
    <property type="entry name" value="Winged helix-like DNA-binding domain superfamily/Winged helix DNA-binding domain"/>
    <property type="match status" value="1"/>
</dbReference>
<dbReference type="InterPro" id="IPR000418">
    <property type="entry name" value="Ets_dom"/>
</dbReference>
<dbReference type="InterPro" id="IPR046328">
    <property type="entry name" value="ETS_fam"/>
</dbReference>
<dbReference type="InterPro" id="IPR036388">
    <property type="entry name" value="WH-like_DNA-bd_sf"/>
</dbReference>
<dbReference type="InterPro" id="IPR036390">
    <property type="entry name" value="WH_DNA-bd_sf"/>
</dbReference>
<dbReference type="PANTHER" id="PTHR11849">
    <property type="entry name" value="ETS"/>
    <property type="match status" value="1"/>
</dbReference>
<dbReference type="PANTHER" id="PTHR11849:SF209">
    <property type="entry name" value="ETS TRANSLOCATION VARIANT 2"/>
    <property type="match status" value="1"/>
</dbReference>
<dbReference type="Pfam" id="PF00178">
    <property type="entry name" value="Ets"/>
    <property type="match status" value="1"/>
</dbReference>
<dbReference type="PRINTS" id="PR00454">
    <property type="entry name" value="ETSDOMAIN"/>
</dbReference>
<dbReference type="SMART" id="SM00413">
    <property type="entry name" value="ETS"/>
    <property type="match status" value="1"/>
</dbReference>
<dbReference type="SUPFAM" id="SSF46785">
    <property type="entry name" value="Winged helix' DNA-binding domain"/>
    <property type="match status" value="1"/>
</dbReference>
<dbReference type="PROSITE" id="PS00345">
    <property type="entry name" value="ETS_DOMAIN_1"/>
    <property type="match status" value="1"/>
</dbReference>
<dbReference type="PROSITE" id="PS00346">
    <property type="entry name" value="ETS_DOMAIN_2"/>
    <property type="match status" value="1"/>
</dbReference>
<dbReference type="PROSITE" id="PS50061">
    <property type="entry name" value="ETS_DOMAIN_3"/>
    <property type="match status" value="1"/>
</dbReference>
<sequence>MDLWNWDEASLQEVPPGDKLTGLGAEFGFYFPEVALQEDTPITPMNVEGCWKGFPELDWNPALPHEDVPFQAEPVAHPLPWSRDWTDLGCNTSDPWSCASQTPGPAPPGTSPSPFVGFEGATGQNPATSAGGVPSWSHPPAAWSTTSWDCSVGPSGATYWDNGLGGEAHEDYKMSWGGSAGSDYTTTWNTGLQDCSIPFEGHQSPAFTTPSKSNKQSDRATLTRYSKTNHRGPIQLWQFLLELLHDGARSSCIRWTGNSREFQLCDPKEVARLWGERKRKPGMNYEKLSRGLRYYYRRDIVLKSGGRKYTYRFGGRVPVLAYQDDMGHLPGAEGQ</sequence>
<proteinExistence type="evidence at transcript level"/>
<evidence type="ECO:0000255" key="1">
    <source>
        <dbReference type="PROSITE-ProRule" id="PRU00237"/>
    </source>
</evidence>
<evidence type="ECO:0000256" key="2">
    <source>
        <dbReference type="SAM" id="MobiDB-lite"/>
    </source>
</evidence>
<evidence type="ECO:0000305" key="3"/>
<comment type="function">
    <text>Binds to DNA sequences containing the consensus pentanucleotide 5'-CGGA[AT]-3'.</text>
</comment>
<comment type="subcellular location">
    <subcellularLocation>
        <location>Nucleus</location>
    </subcellularLocation>
</comment>
<comment type="tissue specificity">
    <text>Testis.</text>
</comment>
<comment type="similarity">
    <text evidence="3">Belongs to the ETS family.</text>
</comment>
<gene>
    <name type="primary">Etv2</name>
    <name type="synonym">Er71</name>
    <name type="synonym">Etsrp71</name>
</gene>
<protein>
    <recommendedName>
        <fullName>ETS translocation variant 2</fullName>
    </recommendedName>
    <alternativeName>
        <fullName>Ets-related protein 71</fullName>
    </alternativeName>
</protein>
<feature type="chain" id="PRO_0000204113" description="ETS translocation variant 2">
    <location>
        <begin position="1"/>
        <end position="335"/>
    </location>
</feature>
<feature type="DNA-binding region" description="ETS" evidence="1">
    <location>
        <begin position="234"/>
        <end position="314"/>
    </location>
</feature>
<feature type="region of interest" description="Disordered" evidence="2">
    <location>
        <begin position="94"/>
        <end position="138"/>
    </location>
</feature>
<feature type="region of interest" description="Disordered" evidence="2">
    <location>
        <begin position="201"/>
        <end position="220"/>
    </location>
</feature>
<feature type="compositionally biased region" description="Polar residues" evidence="2">
    <location>
        <begin position="205"/>
        <end position="220"/>
    </location>
</feature>
<feature type="sequence conflict" description="In Ref. 1; AAA19665." evidence="3" ref="1">
    <original>H</original>
    <variation>Q</variation>
    <location>
        <position position="245"/>
    </location>
</feature>
<accession>P41163</accession>
<accession>F8VQ08</accession>